<reference key="1">
    <citation type="journal article" date="2009" name="PLoS ONE">
        <title>Genome degradation in Brucella ovis corresponds with narrowing of its host range and tissue tropism.</title>
        <authorList>
            <person name="Tsolis R.M."/>
            <person name="Seshadri R."/>
            <person name="Santos R.L."/>
            <person name="Sangari F.J."/>
            <person name="Lobo J.M."/>
            <person name="de Jong M.F."/>
            <person name="Ren Q."/>
            <person name="Myers G."/>
            <person name="Brinkac L.M."/>
            <person name="Nelson W.C."/>
            <person name="Deboy R.T."/>
            <person name="Angiuoli S."/>
            <person name="Khouri H."/>
            <person name="Dimitrov G."/>
            <person name="Robinson J.R."/>
            <person name="Mulligan S."/>
            <person name="Walker R.L."/>
            <person name="Elzer P.E."/>
            <person name="Hassan K.A."/>
            <person name="Paulsen I.T."/>
        </authorList>
    </citation>
    <scope>NUCLEOTIDE SEQUENCE [LARGE SCALE GENOMIC DNA]</scope>
    <source>
        <strain>ATCC 25840 / 63/290 / NCTC 10512</strain>
    </source>
</reference>
<feature type="chain" id="PRO_1000019275" description="Ferrochelatase">
    <location>
        <begin position="1"/>
        <end position="352"/>
    </location>
</feature>
<feature type="binding site" evidence="1">
    <location>
        <position position="222"/>
    </location>
    <ligand>
        <name>Fe cation</name>
        <dbReference type="ChEBI" id="CHEBI:24875"/>
    </ligand>
</feature>
<feature type="binding site" evidence="1">
    <location>
        <position position="303"/>
    </location>
    <ligand>
        <name>Fe cation</name>
        <dbReference type="ChEBI" id="CHEBI:24875"/>
    </ligand>
</feature>
<organism>
    <name type="scientific">Brucella ovis (strain ATCC 25840 / 63/290 / NCTC 10512)</name>
    <dbReference type="NCBI Taxonomy" id="444178"/>
    <lineage>
        <taxon>Bacteria</taxon>
        <taxon>Pseudomonadati</taxon>
        <taxon>Pseudomonadota</taxon>
        <taxon>Alphaproteobacteria</taxon>
        <taxon>Hyphomicrobiales</taxon>
        <taxon>Brucellaceae</taxon>
        <taxon>Brucella/Ochrobactrum group</taxon>
        <taxon>Brucella</taxon>
    </lineage>
</organism>
<dbReference type="EC" id="4.98.1.1" evidence="1"/>
<dbReference type="EMBL" id="CP000709">
    <property type="protein sequence ID" value="ABQ62760.1"/>
    <property type="molecule type" value="Genomic_DNA"/>
</dbReference>
<dbReference type="RefSeq" id="WP_004681236.1">
    <property type="nucleotide sequence ID" value="NC_009504.1"/>
</dbReference>
<dbReference type="SMR" id="A5VTJ7"/>
<dbReference type="GeneID" id="97535704"/>
<dbReference type="KEGG" id="bov:BOV_A0071"/>
<dbReference type="HOGENOM" id="CLU_018884_0_0_5"/>
<dbReference type="UniPathway" id="UPA00252">
    <property type="reaction ID" value="UER00325"/>
</dbReference>
<dbReference type="PRO" id="PR:A5VTJ7"/>
<dbReference type="Proteomes" id="UP000006383">
    <property type="component" value="Chromosome II"/>
</dbReference>
<dbReference type="GO" id="GO:0005737">
    <property type="term" value="C:cytoplasm"/>
    <property type="evidence" value="ECO:0007669"/>
    <property type="project" value="UniProtKB-SubCell"/>
</dbReference>
<dbReference type="GO" id="GO:0004325">
    <property type="term" value="F:ferrochelatase activity"/>
    <property type="evidence" value="ECO:0007669"/>
    <property type="project" value="UniProtKB-UniRule"/>
</dbReference>
<dbReference type="GO" id="GO:0046872">
    <property type="term" value="F:metal ion binding"/>
    <property type="evidence" value="ECO:0007669"/>
    <property type="project" value="UniProtKB-KW"/>
</dbReference>
<dbReference type="GO" id="GO:0006783">
    <property type="term" value="P:heme biosynthetic process"/>
    <property type="evidence" value="ECO:0007669"/>
    <property type="project" value="UniProtKB-UniRule"/>
</dbReference>
<dbReference type="CDD" id="cd00419">
    <property type="entry name" value="Ferrochelatase_C"/>
    <property type="match status" value="1"/>
</dbReference>
<dbReference type="CDD" id="cd03411">
    <property type="entry name" value="Ferrochelatase_N"/>
    <property type="match status" value="1"/>
</dbReference>
<dbReference type="FunFam" id="3.40.50.1400:FF:000002">
    <property type="entry name" value="Ferrochelatase"/>
    <property type="match status" value="1"/>
</dbReference>
<dbReference type="Gene3D" id="3.40.50.1400">
    <property type="match status" value="2"/>
</dbReference>
<dbReference type="HAMAP" id="MF_00323">
    <property type="entry name" value="Ferrochelatase"/>
    <property type="match status" value="1"/>
</dbReference>
<dbReference type="InterPro" id="IPR001015">
    <property type="entry name" value="Ferrochelatase"/>
</dbReference>
<dbReference type="InterPro" id="IPR019772">
    <property type="entry name" value="Ferrochelatase_AS"/>
</dbReference>
<dbReference type="InterPro" id="IPR033644">
    <property type="entry name" value="Ferrochelatase_C"/>
</dbReference>
<dbReference type="InterPro" id="IPR033659">
    <property type="entry name" value="Ferrochelatase_N"/>
</dbReference>
<dbReference type="NCBIfam" id="TIGR00109">
    <property type="entry name" value="hemH"/>
    <property type="match status" value="1"/>
</dbReference>
<dbReference type="PANTHER" id="PTHR11108">
    <property type="entry name" value="FERROCHELATASE"/>
    <property type="match status" value="1"/>
</dbReference>
<dbReference type="PANTHER" id="PTHR11108:SF1">
    <property type="entry name" value="FERROCHELATASE, MITOCHONDRIAL"/>
    <property type="match status" value="1"/>
</dbReference>
<dbReference type="Pfam" id="PF00762">
    <property type="entry name" value="Ferrochelatase"/>
    <property type="match status" value="1"/>
</dbReference>
<dbReference type="SUPFAM" id="SSF53800">
    <property type="entry name" value="Chelatase"/>
    <property type="match status" value="1"/>
</dbReference>
<dbReference type="PROSITE" id="PS00534">
    <property type="entry name" value="FERROCHELATASE"/>
    <property type="match status" value="1"/>
</dbReference>
<gene>
    <name evidence="1" type="primary">hemH</name>
    <name type="ordered locus">BOV_A0071</name>
</gene>
<name>HEMH_BRUO2</name>
<keyword id="KW-0963">Cytoplasm</keyword>
<keyword id="KW-0350">Heme biosynthesis</keyword>
<keyword id="KW-0408">Iron</keyword>
<keyword id="KW-0456">Lyase</keyword>
<keyword id="KW-0479">Metal-binding</keyword>
<keyword id="KW-0627">Porphyrin biosynthesis</keyword>
<accession>A5VTJ7</accession>
<proteinExistence type="inferred from homology"/>
<evidence type="ECO:0000255" key="1">
    <source>
        <dbReference type="HAMAP-Rule" id="MF_00323"/>
    </source>
</evidence>
<sequence length="352" mass="40057">MSGTDKVRVNVSQTAQTPLHTSAKLPKVGVLLVNLGTPDGTSYGPMRRYLAEFLSDRRVIEWSRLIWYPILYGIVLNTRPRRSGRLYDRIWNHENNESPLRTYTRAQGEKLAKALSDQPNVVVDWAMRYGQPSIESITDRLLQQGCERIVIFPLYPQYSATTTATVNDKFFEALMKKRFMPAIRTVPSYEAEPVYIDALARSVEKHLATLSFKPEVILTSYHGIPKSYSDKGDPYRQQCLETTRLLRERLGLGEDEMRATFQSRFGPEEWLQPYTDETVKELAKNGVKSVAVLNPGFVADCLETVDEIGNEAAEEFLENGGENFSHIPCLNDSEEGMKVIETLVRRELLGWV</sequence>
<comment type="function">
    <text evidence="1">Catalyzes the ferrous insertion into protoporphyrin IX.</text>
</comment>
<comment type="catalytic activity">
    <reaction evidence="1">
        <text>heme b + 2 H(+) = protoporphyrin IX + Fe(2+)</text>
        <dbReference type="Rhea" id="RHEA:22584"/>
        <dbReference type="ChEBI" id="CHEBI:15378"/>
        <dbReference type="ChEBI" id="CHEBI:29033"/>
        <dbReference type="ChEBI" id="CHEBI:57306"/>
        <dbReference type="ChEBI" id="CHEBI:60344"/>
        <dbReference type="EC" id="4.98.1.1"/>
    </reaction>
</comment>
<comment type="pathway">
    <text evidence="1">Porphyrin-containing compound metabolism; protoheme biosynthesis; protoheme from protoporphyrin-IX: step 1/1.</text>
</comment>
<comment type="subcellular location">
    <subcellularLocation>
        <location evidence="1">Cytoplasm</location>
    </subcellularLocation>
</comment>
<comment type="similarity">
    <text evidence="1">Belongs to the ferrochelatase family.</text>
</comment>
<protein>
    <recommendedName>
        <fullName evidence="1">Ferrochelatase</fullName>
        <ecNumber evidence="1">4.98.1.1</ecNumber>
    </recommendedName>
    <alternativeName>
        <fullName evidence="1">Heme synthase</fullName>
    </alternativeName>
    <alternativeName>
        <fullName evidence="1">Protoheme ferro-lyase</fullName>
    </alternativeName>
</protein>